<sequence>MIELRPLLQLNLEDGIPVLKDLLTADSFSFTDVELLRYIPAIAKNTPAQTRDLAASVADALDVDQTTALAAIEALVELGLLVPSASISSQKAGIQLWVDKGWVDALILHFASRNLNYNDDPIEFGGLEDIKSYPEPMESKRRKRGTATRLVKPSRELAAAVILDGLMNRRSFKPFTRKQLSITEVSEILWFGNLYARERAVIAENRDFESPRDIAFDSAFSALSTFVVTYGQIDWQDGSLPPGVYRYNVVNHELEAIRAGDFKLDMAKLAIGQSRASSGLFTFVICGDLKSYTSRYRHERSYRNLLINTSQLAQFYLTLATINDFNTFLTPAIHDEKMHLFLEAEDDLPLYLVTAG</sequence>
<gene>
    <name type="primary">tfxC</name>
</gene>
<accession>P42725</accession>
<protein>
    <recommendedName>
        <fullName>Trifolitoxin operon protein TfxC</fullName>
    </recommendedName>
</protein>
<name>TFXC_RHILT</name>
<feature type="chain" id="PRO_0000072505" description="Trifolitoxin operon protein TfxC">
    <location>
        <begin position="1"/>
        <end position="356"/>
    </location>
</feature>
<organism>
    <name type="scientific">Rhizobium leguminosarum bv. trifolii</name>
    <dbReference type="NCBI Taxonomy" id="386"/>
    <lineage>
        <taxon>Bacteria</taxon>
        <taxon>Pseudomonadati</taxon>
        <taxon>Pseudomonadota</taxon>
        <taxon>Alphaproteobacteria</taxon>
        <taxon>Hyphomicrobiales</taxon>
        <taxon>Rhizobiaceae</taxon>
        <taxon>Rhizobium/Agrobacterium group</taxon>
        <taxon>Rhizobium</taxon>
    </lineage>
</organism>
<proteinExistence type="predicted"/>
<dbReference type="EMBL" id="L06719">
    <property type="protein sequence ID" value="AAA26365.1"/>
    <property type="molecule type" value="Genomic_DNA"/>
</dbReference>
<dbReference type="PIR" id="C47116">
    <property type="entry name" value="C47116"/>
</dbReference>
<dbReference type="SMR" id="P42725"/>
<dbReference type="GO" id="GO:0016491">
    <property type="term" value="F:oxidoreductase activity"/>
    <property type="evidence" value="ECO:0007669"/>
    <property type="project" value="InterPro"/>
</dbReference>
<dbReference type="CDD" id="cd02142">
    <property type="entry name" value="McbC_SagB-like_oxidoreductase"/>
    <property type="match status" value="1"/>
</dbReference>
<dbReference type="Gene3D" id="3.40.109.10">
    <property type="entry name" value="NADH Oxidase"/>
    <property type="match status" value="1"/>
</dbReference>
<dbReference type="InterPro" id="IPR052544">
    <property type="entry name" value="Bacteriocin_Proc_Enz"/>
</dbReference>
<dbReference type="InterPro" id="IPR000415">
    <property type="entry name" value="Nitroreductase-like"/>
</dbReference>
<dbReference type="PANTHER" id="PTHR43745">
    <property type="entry name" value="NITROREDUCTASE MJ1384-RELATED"/>
    <property type="match status" value="1"/>
</dbReference>
<dbReference type="PANTHER" id="PTHR43745:SF2">
    <property type="entry name" value="NITROREDUCTASE MJ1384-RELATED"/>
    <property type="match status" value="1"/>
</dbReference>
<reference key="1">
    <citation type="journal article" date="1993" name="J. Bacteriol.">
        <title>DNA sequence and mutational analysis of genes involved in the production and resistance of the antibiotic peptide trifolitoxin.</title>
        <authorList>
            <person name="Breil B.T."/>
            <person name="Ludden P.W."/>
            <person name="Triplett E.W."/>
        </authorList>
    </citation>
    <scope>NUCLEOTIDE SEQUENCE [GENOMIC DNA]</scope>
    <source>
        <strain>T24</strain>
    </source>
</reference>